<dbReference type="SMR" id="D3ZW91"/>
<dbReference type="FunCoup" id="D3ZW91">
    <property type="interactions" value="700"/>
</dbReference>
<dbReference type="STRING" id="10116.ENSRNOP00000032069"/>
<dbReference type="PhosphoSitePlus" id="D3ZW91"/>
<dbReference type="PaxDb" id="10116-ENSRNOP00000032069"/>
<dbReference type="UCSC" id="RGD:2323942">
    <property type="organism name" value="rat"/>
</dbReference>
<dbReference type="AGR" id="RGD:2323942"/>
<dbReference type="RGD" id="2323942">
    <property type="gene designation" value="Poc1b"/>
</dbReference>
<dbReference type="eggNOG" id="ENOG502QSVJ">
    <property type="taxonomic scope" value="Eukaryota"/>
</dbReference>
<dbReference type="InParanoid" id="D3ZW91"/>
<dbReference type="PhylomeDB" id="D3ZW91"/>
<dbReference type="TreeFam" id="TF324210"/>
<dbReference type="PRO" id="PR:D3ZW91"/>
<dbReference type="Proteomes" id="UP000002494">
    <property type="component" value="Unplaced"/>
</dbReference>
<dbReference type="GO" id="GO:0005814">
    <property type="term" value="C:centriole"/>
    <property type="evidence" value="ECO:0000250"/>
    <property type="project" value="UniProtKB"/>
</dbReference>
<dbReference type="GO" id="GO:0005813">
    <property type="term" value="C:centrosome"/>
    <property type="evidence" value="ECO:0000266"/>
    <property type="project" value="RGD"/>
</dbReference>
<dbReference type="GO" id="GO:0036064">
    <property type="term" value="C:ciliary basal body"/>
    <property type="evidence" value="ECO:0000266"/>
    <property type="project" value="RGD"/>
</dbReference>
<dbReference type="GO" id="GO:0005737">
    <property type="term" value="C:cytoplasm"/>
    <property type="evidence" value="ECO:0007669"/>
    <property type="project" value="UniProtKB-KW"/>
</dbReference>
<dbReference type="GO" id="GO:0000922">
    <property type="term" value="C:spindle pole"/>
    <property type="evidence" value="ECO:0000250"/>
    <property type="project" value="UniProtKB"/>
</dbReference>
<dbReference type="GO" id="GO:0001675">
    <property type="term" value="P:acrosome assembly"/>
    <property type="evidence" value="ECO:0000266"/>
    <property type="project" value="RGD"/>
</dbReference>
<dbReference type="GO" id="GO:0000902">
    <property type="term" value="P:cell morphogenesis"/>
    <property type="evidence" value="ECO:0000266"/>
    <property type="project" value="RGD"/>
</dbReference>
<dbReference type="GO" id="GO:0008283">
    <property type="term" value="P:cell population proliferation"/>
    <property type="evidence" value="ECO:0000250"/>
    <property type="project" value="UniProtKB"/>
</dbReference>
<dbReference type="GO" id="GO:0007099">
    <property type="term" value="P:centriole replication"/>
    <property type="evidence" value="ECO:0000250"/>
    <property type="project" value="UniProtKB"/>
</dbReference>
<dbReference type="GO" id="GO:0060271">
    <property type="term" value="P:cilium assembly"/>
    <property type="evidence" value="ECO:0000266"/>
    <property type="project" value="RGD"/>
</dbReference>
<dbReference type="GO" id="GO:0048872">
    <property type="term" value="P:homeostasis of number of cells"/>
    <property type="evidence" value="ECO:0000266"/>
    <property type="project" value="RGD"/>
</dbReference>
<dbReference type="GO" id="GO:1903724">
    <property type="term" value="P:positive regulation of centriole elongation"/>
    <property type="evidence" value="ECO:0000250"/>
    <property type="project" value="UniProtKB"/>
</dbReference>
<dbReference type="GO" id="GO:0001895">
    <property type="term" value="P:retina homeostasis"/>
    <property type="evidence" value="ECO:0000266"/>
    <property type="project" value="RGD"/>
</dbReference>
<dbReference type="GO" id="GO:0007338">
    <property type="term" value="P:single fertilization"/>
    <property type="evidence" value="ECO:0000266"/>
    <property type="project" value="RGD"/>
</dbReference>
<dbReference type="GO" id="GO:0120316">
    <property type="term" value="P:sperm flagellum assembly"/>
    <property type="evidence" value="ECO:0000266"/>
    <property type="project" value="RGD"/>
</dbReference>
<dbReference type="GO" id="GO:0007283">
    <property type="term" value="P:spermatogenesis"/>
    <property type="evidence" value="ECO:0000266"/>
    <property type="project" value="RGD"/>
</dbReference>
<dbReference type="CDD" id="cd00200">
    <property type="entry name" value="WD40"/>
    <property type="match status" value="1"/>
</dbReference>
<dbReference type="FunFam" id="2.130.10.10:FF:000235">
    <property type="entry name" value="POC1 centriolar protein homolog B"/>
    <property type="match status" value="1"/>
</dbReference>
<dbReference type="FunFam" id="2.130.10.10:FF:000279">
    <property type="entry name" value="POC1 centriolar protein homolog B"/>
    <property type="match status" value="1"/>
</dbReference>
<dbReference type="FunFam" id="2.130.10.10:FF:002091">
    <property type="entry name" value="POC1 centriolar protein homolog B"/>
    <property type="match status" value="1"/>
</dbReference>
<dbReference type="Gene3D" id="2.130.10.10">
    <property type="entry name" value="YVTN repeat-like/Quinoprotein amine dehydrogenase"/>
    <property type="match status" value="3"/>
</dbReference>
<dbReference type="InterPro" id="IPR020472">
    <property type="entry name" value="G-protein_beta_WD-40_rep"/>
</dbReference>
<dbReference type="InterPro" id="IPR015943">
    <property type="entry name" value="WD40/YVTN_repeat-like_dom_sf"/>
</dbReference>
<dbReference type="InterPro" id="IPR019775">
    <property type="entry name" value="WD40_repeat_CS"/>
</dbReference>
<dbReference type="InterPro" id="IPR036322">
    <property type="entry name" value="WD40_repeat_dom_sf"/>
</dbReference>
<dbReference type="InterPro" id="IPR001680">
    <property type="entry name" value="WD40_rpt"/>
</dbReference>
<dbReference type="InterPro" id="IPR050505">
    <property type="entry name" value="WDR55_POC1"/>
</dbReference>
<dbReference type="PANTHER" id="PTHR44019:SF1">
    <property type="entry name" value="POC1 CENTRIOLAR PROTEIN HOMOLOG B"/>
    <property type="match status" value="1"/>
</dbReference>
<dbReference type="PANTHER" id="PTHR44019">
    <property type="entry name" value="WD REPEAT-CONTAINING PROTEIN 55"/>
    <property type="match status" value="1"/>
</dbReference>
<dbReference type="Pfam" id="PF00400">
    <property type="entry name" value="WD40"/>
    <property type="match status" value="7"/>
</dbReference>
<dbReference type="PRINTS" id="PR00320">
    <property type="entry name" value="GPROTEINBRPT"/>
</dbReference>
<dbReference type="SMART" id="SM00320">
    <property type="entry name" value="WD40"/>
    <property type="match status" value="7"/>
</dbReference>
<dbReference type="SUPFAM" id="SSF50978">
    <property type="entry name" value="WD40 repeat-like"/>
    <property type="match status" value="1"/>
</dbReference>
<dbReference type="PROSITE" id="PS00678">
    <property type="entry name" value="WD_REPEATS_1"/>
    <property type="match status" value="2"/>
</dbReference>
<dbReference type="PROSITE" id="PS50082">
    <property type="entry name" value="WD_REPEATS_2"/>
    <property type="match status" value="7"/>
</dbReference>
<dbReference type="PROSITE" id="PS50294">
    <property type="entry name" value="WD_REPEATS_REGION"/>
    <property type="match status" value="1"/>
</dbReference>
<reference key="1">
    <citation type="journal article" date="2004" name="Nature">
        <title>Genome sequence of the Brown Norway rat yields insights into mammalian evolution.</title>
        <authorList>
            <person name="Gibbs R.A."/>
            <person name="Weinstock G.M."/>
            <person name="Metzker M.L."/>
            <person name="Muzny D.M."/>
            <person name="Sodergren E.J."/>
            <person name="Scherer S."/>
            <person name="Scott G."/>
            <person name="Steffen D."/>
            <person name="Worley K.C."/>
            <person name="Burch P.E."/>
            <person name="Okwuonu G."/>
            <person name="Hines S."/>
            <person name="Lewis L."/>
            <person name="Deramo C."/>
            <person name="Delgado O."/>
            <person name="Dugan-Rocha S."/>
            <person name="Miner G."/>
            <person name="Morgan M."/>
            <person name="Hawes A."/>
            <person name="Gill R."/>
            <person name="Holt R.A."/>
            <person name="Adams M.D."/>
            <person name="Amanatides P.G."/>
            <person name="Baden-Tillson H."/>
            <person name="Barnstead M."/>
            <person name="Chin S."/>
            <person name="Evans C.A."/>
            <person name="Ferriera S."/>
            <person name="Fosler C."/>
            <person name="Glodek A."/>
            <person name="Gu Z."/>
            <person name="Jennings D."/>
            <person name="Kraft C.L."/>
            <person name="Nguyen T."/>
            <person name="Pfannkoch C.M."/>
            <person name="Sitter C."/>
            <person name="Sutton G.G."/>
            <person name="Venter J.C."/>
            <person name="Woodage T."/>
            <person name="Smith D."/>
            <person name="Lee H.-M."/>
            <person name="Gustafson E."/>
            <person name="Cahill P."/>
            <person name="Kana A."/>
            <person name="Doucette-Stamm L."/>
            <person name="Weinstock K."/>
            <person name="Fechtel K."/>
            <person name="Weiss R.B."/>
            <person name="Dunn D.M."/>
            <person name="Green E.D."/>
            <person name="Blakesley R.W."/>
            <person name="Bouffard G.G."/>
            <person name="De Jong P.J."/>
            <person name="Osoegawa K."/>
            <person name="Zhu B."/>
            <person name="Marra M."/>
            <person name="Schein J."/>
            <person name="Bosdet I."/>
            <person name="Fjell C."/>
            <person name="Jones S."/>
            <person name="Krzywinski M."/>
            <person name="Mathewson C."/>
            <person name="Siddiqui A."/>
            <person name="Wye N."/>
            <person name="McPherson J."/>
            <person name="Zhao S."/>
            <person name="Fraser C.M."/>
            <person name="Shetty J."/>
            <person name="Shatsman S."/>
            <person name="Geer K."/>
            <person name="Chen Y."/>
            <person name="Abramzon S."/>
            <person name="Nierman W.C."/>
            <person name="Havlak P.H."/>
            <person name="Chen R."/>
            <person name="Durbin K.J."/>
            <person name="Egan A."/>
            <person name="Ren Y."/>
            <person name="Song X.-Z."/>
            <person name="Li B."/>
            <person name="Liu Y."/>
            <person name="Qin X."/>
            <person name="Cawley S."/>
            <person name="Cooney A.J."/>
            <person name="D'Souza L.M."/>
            <person name="Martin K."/>
            <person name="Wu J.Q."/>
            <person name="Gonzalez-Garay M.L."/>
            <person name="Jackson A.R."/>
            <person name="Kalafus K.J."/>
            <person name="McLeod M.P."/>
            <person name="Milosavljevic A."/>
            <person name="Virk D."/>
            <person name="Volkov A."/>
            <person name="Wheeler D.A."/>
            <person name="Zhang Z."/>
            <person name="Bailey J.A."/>
            <person name="Eichler E.E."/>
            <person name="Tuzun E."/>
            <person name="Birney E."/>
            <person name="Mongin E."/>
            <person name="Ureta-Vidal A."/>
            <person name="Woodwark C."/>
            <person name="Zdobnov E."/>
            <person name="Bork P."/>
            <person name="Suyama M."/>
            <person name="Torrents D."/>
            <person name="Alexandersson M."/>
            <person name="Trask B.J."/>
            <person name="Young J.M."/>
            <person name="Huang H."/>
            <person name="Wang H."/>
            <person name="Xing H."/>
            <person name="Daniels S."/>
            <person name="Gietzen D."/>
            <person name="Schmidt J."/>
            <person name="Stevens K."/>
            <person name="Vitt U."/>
            <person name="Wingrove J."/>
            <person name="Camara F."/>
            <person name="Mar Alba M."/>
            <person name="Abril J.F."/>
            <person name="Guigo R."/>
            <person name="Smit A."/>
            <person name="Dubchak I."/>
            <person name="Rubin E.M."/>
            <person name="Couronne O."/>
            <person name="Poliakov A."/>
            <person name="Huebner N."/>
            <person name="Ganten D."/>
            <person name="Goesele C."/>
            <person name="Hummel O."/>
            <person name="Kreitler T."/>
            <person name="Lee Y.-A."/>
            <person name="Monti J."/>
            <person name="Schulz H."/>
            <person name="Zimdahl H."/>
            <person name="Himmelbauer H."/>
            <person name="Lehrach H."/>
            <person name="Jacob H.J."/>
            <person name="Bromberg S."/>
            <person name="Gullings-Handley J."/>
            <person name="Jensen-Seaman M.I."/>
            <person name="Kwitek A.E."/>
            <person name="Lazar J."/>
            <person name="Pasko D."/>
            <person name="Tonellato P.J."/>
            <person name="Twigger S."/>
            <person name="Ponting C.P."/>
            <person name="Duarte J.M."/>
            <person name="Rice S."/>
            <person name="Goodstadt L."/>
            <person name="Beatson S.A."/>
            <person name="Emes R.D."/>
            <person name="Winter E.E."/>
            <person name="Webber C."/>
            <person name="Brandt P."/>
            <person name="Nyakatura G."/>
            <person name="Adetobi M."/>
            <person name="Chiaromonte F."/>
            <person name="Elnitski L."/>
            <person name="Eswara P."/>
            <person name="Hardison R.C."/>
            <person name="Hou M."/>
            <person name="Kolbe D."/>
            <person name="Makova K."/>
            <person name="Miller W."/>
            <person name="Nekrutenko A."/>
            <person name="Riemer C."/>
            <person name="Schwartz S."/>
            <person name="Taylor J."/>
            <person name="Yang S."/>
            <person name="Zhang Y."/>
            <person name="Lindpaintner K."/>
            <person name="Andrews T.D."/>
            <person name="Caccamo M."/>
            <person name="Clamp M."/>
            <person name="Clarke L."/>
            <person name="Curwen V."/>
            <person name="Durbin R.M."/>
            <person name="Eyras E."/>
            <person name="Searle S.M."/>
            <person name="Cooper G.M."/>
            <person name="Batzoglou S."/>
            <person name="Brudno M."/>
            <person name="Sidow A."/>
            <person name="Stone E.A."/>
            <person name="Payseur B.A."/>
            <person name="Bourque G."/>
            <person name="Lopez-Otin C."/>
            <person name="Puente X.S."/>
            <person name="Chakrabarti K."/>
            <person name="Chatterji S."/>
            <person name="Dewey C."/>
            <person name="Pachter L."/>
            <person name="Bray N."/>
            <person name="Yap V.B."/>
            <person name="Caspi A."/>
            <person name="Tesler G."/>
            <person name="Pevzner P.A."/>
            <person name="Haussler D."/>
            <person name="Roskin K.M."/>
            <person name="Baertsch R."/>
            <person name="Clawson H."/>
            <person name="Furey T.S."/>
            <person name="Hinrichs A.S."/>
            <person name="Karolchik D."/>
            <person name="Kent W.J."/>
            <person name="Rosenbloom K.R."/>
            <person name="Trumbower H."/>
            <person name="Weirauch M."/>
            <person name="Cooper D.N."/>
            <person name="Stenson P.D."/>
            <person name="Ma B."/>
            <person name="Brent M."/>
            <person name="Arumugam M."/>
            <person name="Shteynberg D."/>
            <person name="Copley R.R."/>
            <person name="Taylor M.S."/>
            <person name="Riethman H."/>
            <person name="Mudunuri U."/>
            <person name="Peterson J."/>
            <person name="Guyer M."/>
            <person name="Felsenfeld A."/>
            <person name="Old S."/>
            <person name="Mockrin S."/>
            <person name="Collins F.S."/>
        </authorList>
    </citation>
    <scope>NUCLEOTIDE SEQUENCE [LARGE SCALE GENOMIC DNA]</scope>
    <source>
        <strain>Brown Norway</strain>
    </source>
</reference>
<name>POC1B_RAT</name>
<organism>
    <name type="scientific">Rattus norvegicus</name>
    <name type="common">Rat</name>
    <dbReference type="NCBI Taxonomy" id="10116"/>
    <lineage>
        <taxon>Eukaryota</taxon>
        <taxon>Metazoa</taxon>
        <taxon>Chordata</taxon>
        <taxon>Craniata</taxon>
        <taxon>Vertebrata</taxon>
        <taxon>Euteleostomi</taxon>
        <taxon>Mammalia</taxon>
        <taxon>Eutheria</taxon>
        <taxon>Euarchontoglires</taxon>
        <taxon>Glires</taxon>
        <taxon>Rodentia</taxon>
        <taxon>Myomorpha</taxon>
        <taxon>Muroidea</taxon>
        <taxon>Muridae</taxon>
        <taxon>Murinae</taxon>
        <taxon>Rattus</taxon>
    </lineage>
</organism>
<feature type="chain" id="PRO_0000420366" description="POC1 centriolar protein homolog B">
    <location>
        <begin position="1"/>
        <end position="477"/>
    </location>
</feature>
<feature type="repeat" description="WD 1">
    <location>
        <begin position="16"/>
        <end position="55"/>
    </location>
</feature>
<feature type="repeat" description="WD 2">
    <location>
        <begin position="58"/>
        <end position="97"/>
    </location>
</feature>
<feature type="repeat" description="WD 3">
    <location>
        <begin position="100"/>
        <end position="139"/>
    </location>
</feature>
<feature type="repeat" description="WD 4">
    <location>
        <begin position="142"/>
        <end position="181"/>
    </location>
</feature>
<feature type="repeat" description="WD 5">
    <location>
        <begin position="183"/>
        <end position="223"/>
    </location>
</feature>
<feature type="repeat" description="WD 6">
    <location>
        <begin position="226"/>
        <end position="265"/>
    </location>
</feature>
<feature type="repeat" description="WD 7">
    <location>
        <begin position="268"/>
        <end position="307"/>
    </location>
</feature>
<feature type="coiled-coil region" evidence="4">
    <location>
        <begin position="449"/>
        <end position="469"/>
    </location>
</feature>
<comment type="function">
    <text evidence="3">Plays an important role in centriole assembly and/or stability and ciliogenesis. Involved in early steps of centriole duplication, as well as in the later steps of centriole length control. Acts in concert with POC1A to ensure centriole integrity and proper mitotic spindle formation. Required for primary cilia formation, ciliary length and also cell proliferation. Required for retinal integrity. Acts as a positive regulator of centriole elongation.</text>
</comment>
<comment type="subunit">
    <text evidence="3">Interacts with POC1A. Interacts with FAM161A. Interacts with CEP44; the interaction is direct and recruits POC1B to centriolar microtubules. Forms a microtubule-associated complex with POC5, CETN2 and FAM161A. Interacts with CCDC15.</text>
</comment>
<comment type="subcellular location">
    <subcellularLocation>
        <location evidence="3">Cytoplasm</location>
        <location evidence="3">Cytoskeleton</location>
        <location evidence="3">Microtubule organizing center</location>
        <location evidence="3">Centrosome</location>
        <location evidence="3">Centriole</location>
    </subcellularLocation>
    <subcellularLocation>
        <location evidence="3">Cytoplasm</location>
        <location evidence="3">Cytoskeleton</location>
        <location evidence="3">Cilium basal body</location>
    </subcellularLocation>
    <subcellularLocation>
        <location evidence="3">Cytoplasm</location>
        <location evidence="3">Cytoskeleton</location>
        <location evidence="3">Spindle pole</location>
    </subcellularLocation>
    <text evidence="2 3">Component of both mother and daughter centrioles. Localizes to the basal body and centriole adjacent to the connecting cilium of photoreceptors and in synapses of the outer plexiform layer. Localizes to the inner scaffold in the central region of centrioles.</text>
</comment>
<comment type="PTM">
    <text evidence="1">Phosphorylated in mitotic cells that may be mediated by CDK1.</text>
</comment>
<comment type="similarity">
    <text evidence="5">Belongs to the WD repeat POC1 family.</text>
</comment>
<accession>D3ZW91</accession>
<evidence type="ECO:0000250" key="1"/>
<evidence type="ECO:0000250" key="2">
    <source>
        <dbReference type="UniProtKB" id="Q8BHD1"/>
    </source>
</evidence>
<evidence type="ECO:0000250" key="3">
    <source>
        <dbReference type="UniProtKB" id="Q8TC44"/>
    </source>
</evidence>
<evidence type="ECO:0000255" key="4"/>
<evidence type="ECO:0000305" key="5"/>
<protein>
    <recommendedName>
        <fullName>POC1 centriolar protein homolog B</fullName>
    </recommendedName>
    <alternativeName>
        <fullName>WD repeat-containing protein 51B</fullName>
    </alternativeName>
</protein>
<proteinExistence type="inferred from homology"/>
<gene>
    <name type="primary">Poc1b</name>
    <name type="synonym">Wdr51b</name>
</gene>
<sequence length="477" mass="53512">MASGPEDPILERYFKGHKAAITSADFSPNCKQIATASWDTFLMLWSLKPHARAYRYVGHKDVVTSLQFSPQGNLLASASRDKTVRLWVLDRKGKSSEFKAHTAPVRSVDFSADGQFLVTASEDKSIKVWSMYRQRFLYSLYRHTHWVRCAKFSPDGRLIVSCSEDKTIKIWDTTSKQCVNNFSDSVGFANFVDFSPNGTCIASAGSDHAVRIWDIRMNRLLQHYQVHSCGVNCLSFHPSGNSLVTASSDGTVKILDLVEGRLIYTLQGHTGPVFTVSFSKDGELFTSGGADAQVLVWRTSFNQVHYRDPSKRNLKRLHLEASPHLLDIYPRTPHGHEDKRETIEINPKLEVMDLHSSSPPVVDVLSFDSTTVTDSTCRAVPGKGEDICRYFLNPLLMPECSSTIMKKKPEDVGDPPSENQRSVPLAVADALEHIMEQLNILTQSVSIVEQRLSLTEDKLKDCLENQQKLFSVIQQKS</sequence>
<keyword id="KW-0966">Cell projection</keyword>
<keyword id="KW-0175">Coiled coil</keyword>
<keyword id="KW-0963">Cytoplasm</keyword>
<keyword id="KW-0206">Cytoskeleton</keyword>
<keyword id="KW-0597">Phosphoprotein</keyword>
<keyword id="KW-1185">Reference proteome</keyword>
<keyword id="KW-0677">Repeat</keyword>
<keyword id="KW-0853">WD repeat</keyword>